<feature type="chain" id="PRO_1000075249" description="Imidazoleglycerol-phosphate dehydratase">
    <location>
        <begin position="1"/>
        <end position="199"/>
    </location>
</feature>
<comment type="catalytic activity">
    <reaction evidence="1">
        <text>D-erythro-1-(imidazol-4-yl)glycerol 3-phosphate = 3-(imidazol-4-yl)-2-oxopropyl phosphate + H2O</text>
        <dbReference type="Rhea" id="RHEA:11040"/>
        <dbReference type="ChEBI" id="CHEBI:15377"/>
        <dbReference type="ChEBI" id="CHEBI:57766"/>
        <dbReference type="ChEBI" id="CHEBI:58278"/>
        <dbReference type="EC" id="4.2.1.19"/>
    </reaction>
</comment>
<comment type="pathway">
    <text evidence="1">Amino-acid biosynthesis; L-histidine biosynthesis; L-histidine from 5-phospho-alpha-D-ribose 1-diphosphate: step 6/9.</text>
</comment>
<comment type="subcellular location">
    <subcellularLocation>
        <location evidence="1">Cytoplasm</location>
    </subcellularLocation>
</comment>
<comment type="similarity">
    <text evidence="1">Belongs to the imidazoleglycerol-phosphate dehydratase family.</text>
</comment>
<name>HIS7_KINRD</name>
<proteinExistence type="inferred from homology"/>
<organism>
    <name type="scientific">Kineococcus radiotolerans (strain ATCC BAA-149 / DSM 14245 / SRS30216)</name>
    <dbReference type="NCBI Taxonomy" id="266940"/>
    <lineage>
        <taxon>Bacteria</taxon>
        <taxon>Bacillati</taxon>
        <taxon>Actinomycetota</taxon>
        <taxon>Actinomycetes</taxon>
        <taxon>Kineosporiales</taxon>
        <taxon>Kineosporiaceae</taxon>
        <taxon>Kineococcus</taxon>
    </lineage>
</organism>
<reference key="1">
    <citation type="journal article" date="2008" name="PLoS ONE">
        <title>Survival in nuclear waste, extreme resistance, and potential applications gleaned from the genome sequence of Kineococcus radiotolerans SRS30216.</title>
        <authorList>
            <person name="Bagwell C.E."/>
            <person name="Bhat S."/>
            <person name="Hawkins G.M."/>
            <person name="Smith B.W."/>
            <person name="Biswas T."/>
            <person name="Hoover T.R."/>
            <person name="Saunders E."/>
            <person name="Han C.S."/>
            <person name="Tsodikov O.V."/>
            <person name="Shimkets L.J."/>
        </authorList>
    </citation>
    <scope>NUCLEOTIDE SEQUENCE [LARGE SCALE GENOMIC DNA]</scope>
    <source>
        <strain>ATCC BAA-149 / DSM 14245 / SRS30216</strain>
    </source>
</reference>
<protein>
    <recommendedName>
        <fullName evidence="1">Imidazoleglycerol-phosphate dehydratase</fullName>
        <shortName evidence="1">IGPD</shortName>
        <ecNumber evidence="1">4.2.1.19</ecNumber>
    </recommendedName>
</protein>
<sequence>MSRTARIERSTSESSVLVELDLDGTGRTSIDTTVPFYDHMLTALGKHSLMDLTVVAKGDTHIDVHHTVEDTAIVLGQAFRQALGDKAGIRRFADATVPLDEALAHVVVDVSGRPYCVHTGEPEGQEYHLIGGHFTGSLTRHLLESFAFHARIALHVRVLAGRDPHHVVEAQFKALARALRYAVEPDPRVQGIPSTKGAL</sequence>
<evidence type="ECO:0000255" key="1">
    <source>
        <dbReference type="HAMAP-Rule" id="MF_00076"/>
    </source>
</evidence>
<gene>
    <name evidence="1" type="primary">hisB</name>
    <name type="ordered locus">Krad_3175</name>
</gene>
<keyword id="KW-0028">Amino-acid biosynthesis</keyword>
<keyword id="KW-0963">Cytoplasm</keyword>
<keyword id="KW-0368">Histidine biosynthesis</keyword>
<keyword id="KW-0456">Lyase</keyword>
<keyword id="KW-1185">Reference proteome</keyword>
<accession>A6WCV0</accession>
<dbReference type="EC" id="4.2.1.19" evidence="1"/>
<dbReference type="EMBL" id="CP000750">
    <property type="protein sequence ID" value="ABS04639.1"/>
    <property type="molecule type" value="Genomic_DNA"/>
</dbReference>
<dbReference type="RefSeq" id="WP_012087108.1">
    <property type="nucleotide sequence ID" value="NC_009664.2"/>
</dbReference>
<dbReference type="SMR" id="A6WCV0"/>
<dbReference type="STRING" id="266940.Krad_3175"/>
<dbReference type="KEGG" id="kra:Krad_3175"/>
<dbReference type="eggNOG" id="COG0131">
    <property type="taxonomic scope" value="Bacteria"/>
</dbReference>
<dbReference type="HOGENOM" id="CLU_044308_3_0_11"/>
<dbReference type="OrthoDB" id="9790411at2"/>
<dbReference type="UniPathway" id="UPA00031">
    <property type="reaction ID" value="UER00011"/>
</dbReference>
<dbReference type="Proteomes" id="UP000001116">
    <property type="component" value="Chromosome"/>
</dbReference>
<dbReference type="GO" id="GO:0005737">
    <property type="term" value="C:cytoplasm"/>
    <property type="evidence" value="ECO:0007669"/>
    <property type="project" value="UniProtKB-SubCell"/>
</dbReference>
<dbReference type="GO" id="GO:0004424">
    <property type="term" value="F:imidazoleglycerol-phosphate dehydratase activity"/>
    <property type="evidence" value="ECO:0007669"/>
    <property type="project" value="UniProtKB-UniRule"/>
</dbReference>
<dbReference type="GO" id="GO:0000105">
    <property type="term" value="P:L-histidine biosynthetic process"/>
    <property type="evidence" value="ECO:0007669"/>
    <property type="project" value="UniProtKB-UniRule"/>
</dbReference>
<dbReference type="CDD" id="cd07914">
    <property type="entry name" value="IGPD"/>
    <property type="match status" value="1"/>
</dbReference>
<dbReference type="FunFam" id="3.30.230.40:FF:000001">
    <property type="entry name" value="Imidazoleglycerol-phosphate dehydratase HisB"/>
    <property type="match status" value="1"/>
</dbReference>
<dbReference type="FunFam" id="3.30.230.40:FF:000003">
    <property type="entry name" value="Imidazoleglycerol-phosphate dehydratase HisB"/>
    <property type="match status" value="1"/>
</dbReference>
<dbReference type="Gene3D" id="3.30.230.40">
    <property type="entry name" value="Imidazole glycerol phosphate dehydratase, domain 1"/>
    <property type="match status" value="2"/>
</dbReference>
<dbReference type="HAMAP" id="MF_00076">
    <property type="entry name" value="HisB"/>
    <property type="match status" value="1"/>
</dbReference>
<dbReference type="InterPro" id="IPR038494">
    <property type="entry name" value="IGPD_sf"/>
</dbReference>
<dbReference type="InterPro" id="IPR000807">
    <property type="entry name" value="ImidazoleglycerolP_deHydtase"/>
</dbReference>
<dbReference type="InterPro" id="IPR020565">
    <property type="entry name" value="ImidazoleglycerP_deHydtase_CS"/>
</dbReference>
<dbReference type="InterPro" id="IPR020568">
    <property type="entry name" value="Ribosomal_Su5_D2-typ_SF"/>
</dbReference>
<dbReference type="NCBIfam" id="NF002110">
    <property type="entry name" value="PRK00951.1-6"/>
    <property type="match status" value="1"/>
</dbReference>
<dbReference type="NCBIfam" id="NF002111">
    <property type="entry name" value="PRK00951.2-1"/>
    <property type="match status" value="1"/>
</dbReference>
<dbReference type="NCBIfam" id="NF002114">
    <property type="entry name" value="PRK00951.2-4"/>
    <property type="match status" value="1"/>
</dbReference>
<dbReference type="PANTHER" id="PTHR23133:SF2">
    <property type="entry name" value="IMIDAZOLEGLYCEROL-PHOSPHATE DEHYDRATASE"/>
    <property type="match status" value="1"/>
</dbReference>
<dbReference type="PANTHER" id="PTHR23133">
    <property type="entry name" value="IMIDAZOLEGLYCEROL-PHOSPHATE DEHYDRATASE HIS7"/>
    <property type="match status" value="1"/>
</dbReference>
<dbReference type="Pfam" id="PF00475">
    <property type="entry name" value="IGPD"/>
    <property type="match status" value="1"/>
</dbReference>
<dbReference type="SUPFAM" id="SSF54211">
    <property type="entry name" value="Ribosomal protein S5 domain 2-like"/>
    <property type="match status" value="2"/>
</dbReference>
<dbReference type="PROSITE" id="PS00954">
    <property type="entry name" value="IGP_DEHYDRATASE_1"/>
    <property type="match status" value="1"/>
</dbReference>
<dbReference type="PROSITE" id="PS00955">
    <property type="entry name" value="IGP_DEHYDRATASE_2"/>
    <property type="match status" value="1"/>
</dbReference>